<accession>Q9I2N4</accession>
<proteinExistence type="inferred from homology"/>
<comment type="function">
    <text evidence="1">Part of the ABC transporter complex ModABC involved in molybdenum import. Responsible for energy coupling to the transport system.</text>
</comment>
<comment type="catalytic activity">
    <reaction evidence="1">
        <text>molybdate(out) + ATP + H2O = molybdate(in) + ADP + phosphate + H(+)</text>
        <dbReference type="Rhea" id="RHEA:22020"/>
        <dbReference type="ChEBI" id="CHEBI:15377"/>
        <dbReference type="ChEBI" id="CHEBI:15378"/>
        <dbReference type="ChEBI" id="CHEBI:30616"/>
        <dbReference type="ChEBI" id="CHEBI:36264"/>
        <dbReference type="ChEBI" id="CHEBI:43474"/>
        <dbReference type="ChEBI" id="CHEBI:456216"/>
        <dbReference type="EC" id="7.3.2.5"/>
    </reaction>
</comment>
<comment type="subunit">
    <text evidence="1">The complex is composed of two ATP-binding proteins (ModC), two transmembrane proteins (ModB) and a solute-binding protein (ModA).</text>
</comment>
<comment type="subcellular location">
    <subcellularLocation>
        <location evidence="1">Cell inner membrane</location>
        <topology evidence="1">Peripheral membrane protein</topology>
    </subcellularLocation>
</comment>
<comment type="similarity">
    <text evidence="1">Belongs to the ABC transporter superfamily. Molybdate importer (TC 3.A.1.8) family.</text>
</comment>
<reference key="1">
    <citation type="journal article" date="2000" name="Nature">
        <title>Complete genome sequence of Pseudomonas aeruginosa PAO1, an opportunistic pathogen.</title>
        <authorList>
            <person name="Stover C.K."/>
            <person name="Pham X.-Q.T."/>
            <person name="Erwin A.L."/>
            <person name="Mizoguchi S.D."/>
            <person name="Warrener P."/>
            <person name="Hickey M.J."/>
            <person name="Brinkman F.S.L."/>
            <person name="Hufnagle W.O."/>
            <person name="Kowalik D.J."/>
            <person name="Lagrou M."/>
            <person name="Garber R.L."/>
            <person name="Goltry L."/>
            <person name="Tolentino E."/>
            <person name="Westbrock-Wadman S."/>
            <person name="Yuan Y."/>
            <person name="Brody L.L."/>
            <person name="Coulter S.N."/>
            <person name="Folger K.R."/>
            <person name="Kas A."/>
            <person name="Larbig K."/>
            <person name="Lim R.M."/>
            <person name="Smith K.A."/>
            <person name="Spencer D.H."/>
            <person name="Wong G.K.-S."/>
            <person name="Wu Z."/>
            <person name="Paulsen I.T."/>
            <person name="Reizer J."/>
            <person name="Saier M.H. Jr."/>
            <person name="Hancock R.E.W."/>
            <person name="Lory S."/>
            <person name="Olson M.V."/>
        </authorList>
    </citation>
    <scope>NUCLEOTIDE SEQUENCE [LARGE SCALE GENOMIC DNA]</scope>
    <source>
        <strain>ATCC 15692 / DSM 22644 / CIP 104116 / JCM 14847 / LMG 12228 / 1C / PRS 101 / PAO1</strain>
    </source>
</reference>
<protein>
    <recommendedName>
        <fullName evidence="1">Molybdenum import ATP-binding protein ModC</fullName>
        <ecNumber evidence="1">7.3.2.5</ecNumber>
    </recommendedName>
</protein>
<name>MODC_PSEAE</name>
<sequence>MDGLRLRFRRAYPGFELDIDLALPGRGVTALFGHSGSGKSTCLRCIAGLEKAAEGEVTINGETWQDSRRNLFVAPHRRALGYVFQDANLFRHLTVRRNLAFGLKRIAAAERRVELEQACALLGIEHLLERMPERLSGGEQQRVGIARALLTSPRLLLMDEPLASLDLKRKGEILPYLERLHEELDIPVLYVSHSPDEVARLADHLVLLENGKVRASGPIGETLARVDLPLALDDDAGVVIEGTVSDHDPAYGLLTLVLPGSALQMRVAHAPLAPGKRLRFKVQARDVSLNLRDDAQSSILNRLPVRVLELVDTDTAAHVLVRLDAGGNPLLARITRYSRDQLQLRPGQLLWAQIKSVAVLA</sequence>
<organism>
    <name type="scientific">Pseudomonas aeruginosa (strain ATCC 15692 / DSM 22644 / CIP 104116 / JCM 14847 / LMG 12228 / 1C / PRS 101 / PAO1)</name>
    <dbReference type="NCBI Taxonomy" id="208964"/>
    <lineage>
        <taxon>Bacteria</taxon>
        <taxon>Pseudomonadati</taxon>
        <taxon>Pseudomonadota</taxon>
        <taxon>Gammaproteobacteria</taxon>
        <taxon>Pseudomonadales</taxon>
        <taxon>Pseudomonadaceae</taxon>
        <taxon>Pseudomonas</taxon>
    </lineage>
</organism>
<gene>
    <name evidence="1" type="primary">modC</name>
    <name type="ordered locus">PA1861</name>
</gene>
<evidence type="ECO:0000255" key="1">
    <source>
        <dbReference type="HAMAP-Rule" id="MF_01705"/>
    </source>
</evidence>
<evidence type="ECO:0000255" key="2">
    <source>
        <dbReference type="PROSITE-ProRule" id="PRU01213"/>
    </source>
</evidence>
<keyword id="KW-0067">ATP-binding</keyword>
<keyword id="KW-0997">Cell inner membrane</keyword>
<keyword id="KW-1003">Cell membrane</keyword>
<keyword id="KW-0472">Membrane</keyword>
<keyword id="KW-0500">Molybdenum</keyword>
<keyword id="KW-0547">Nucleotide-binding</keyword>
<keyword id="KW-1185">Reference proteome</keyword>
<keyword id="KW-1278">Translocase</keyword>
<keyword id="KW-0813">Transport</keyword>
<feature type="chain" id="PRO_0000092548" description="Molybdenum import ATP-binding protein ModC">
    <location>
        <begin position="1"/>
        <end position="361"/>
    </location>
</feature>
<feature type="domain" description="ABC transporter" evidence="1">
    <location>
        <begin position="1"/>
        <end position="235"/>
    </location>
</feature>
<feature type="domain" description="Mop" evidence="2">
    <location>
        <begin position="296"/>
        <end position="361"/>
    </location>
</feature>
<feature type="binding site" evidence="1">
    <location>
        <begin position="33"/>
        <end position="40"/>
    </location>
    <ligand>
        <name>ATP</name>
        <dbReference type="ChEBI" id="CHEBI:30616"/>
    </ligand>
</feature>
<dbReference type="EC" id="7.3.2.5" evidence="1"/>
<dbReference type="EMBL" id="AE004091">
    <property type="protein sequence ID" value="AAG05250.1"/>
    <property type="molecule type" value="Genomic_DNA"/>
</dbReference>
<dbReference type="PIR" id="H83412">
    <property type="entry name" value="H83412"/>
</dbReference>
<dbReference type="RefSeq" id="NP_250552.1">
    <property type="nucleotide sequence ID" value="NC_002516.2"/>
</dbReference>
<dbReference type="RefSeq" id="WP_003098212.1">
    <property type="nucleotide sequence ID" value="NZ_QZGE01000003.1"/>
</dbReference>
<dbReference type="SMR" id="Q9I2N4"/>
<dbReference type="FunCoup" id="Q9I2N4">
    <property type="interactions" value="132"/>
</dbReference>
<dbReference type="STRING" id="208964.PA1861"/>
<dbReference type="PaxDb" id="208964-PA1861"/>
<dbReference type="GeneID" id="882019"/>
<dbReference type="KEGG" id="pae:PA1861"/>
<dbReference type="PATRIC" id="fig|208964.12.peg.1936"/>
<dbReference type="PseudoCAP" id="PA1861"/>
<dbReference type="HOGENOM" id="CLU_000604_1_1_6"/>
<dbReference type="InParanoid" id="Q9I2N4"/>
<dbReference type="OrthoDB" id="9802264at2"/>
<dbReference type="PhylomeDB" id="Q9I2N4"/>
<dbReference type="BioCyc" id="PAER208964:G1FZ6-1900-MONOMER"/>
<dbReference type="Proteomes" id="UP000002438">
    <property type="component" value="Chromosome"/>
</dbReference>
<dbReference type="GO" id="GO:0005886">
    <property type="term" value="C:plasma membrane"/>
    <property type="evidence" value="ECO:0007669"/>
    <property type="project" value="UniProtKB-SubCell"/>
</dbReference>
<dbReference type="GO" id="GO:0015412">
    <property type="term" value="F:ABC-type molybdate transporter activity"/>
    <property type="evidence" value="ECO:0007669"/>
    <property type="project" value="UniProtKB-EC"/>
</dbReference>
<dbReference type="GO" id="GO:0005524">
    <property type="term" value="F:ATP binding"/>
    <property type="evidence" value="ECO:0007669"/>
    <property type="project" value="UniProtKB-KW"/>
</dbReference>
<dbReference type="GO" id="GO:0016887">
    <property type="term" value="F:ATP hydrolysis activity"/>
    <property type="evidence" value="ECO:0007669"/>
    <property type="project" value="InterPro"/>
</dbReference>
<dbReference type="FunFam" id="3.40.50.300:FF:000634">
    <property type="entry name" value="Molybdenum import ATP-binding protein ModC"/>
    <property type="match status" value="1"/>
</dbReference>
<dbReference type="Gene3D" id="2.40.50.100">
    <property type="match status" value="1"/>
</dbReference>
<dbReference type="Gene3D" id="3.40.50.300">
    <property type="entry name" value="P-loop containing nucleotide triphosphate hydrolases"/>
    <property type="match status" value="1"/>
</dbReference>
<dbReference type="InterPro" id="IPR003593">
    <property type="entry name" value="AAA+_ATPase"/>
</dbReference>
<dbReference type="InterPro" id="IPR003439">
    <property type="entry name" value="ABC_transporter-like_ATP-bd"/>
</dbReference>
<dbReference type="InterPro" id="IPR017871">
    <property type="entry name" value="ABC_transporter-like_CS"/>
</dbReference>
<dbReference type="InterPro" id="IPR008995">
    <property type="entry name" value="Mo/tungstate-bd_C_term_dom"/>
</dbReference>
<dbReference type="InterPro" id="IPR011868">
    <property type="entry name" value="ModC_ABC_ATP-bd"/>
</dbReference>
<dbReference type="InterPro" id="IPR050334">
    <property type="entry name" value="Molybdenum_import_ModC"/>
</dbReference>
<dbReference type="InterPro" id="IPR004606">
    <property type="entry name" value="Mop_domain"/>
</dbReference>
<dbReference type="InterPro" id="IPR027417">
    <property type="entry name" value="P-loop_NTPase"/>
</dbReference>
<dbReference type="InterPro" id="IPR005116">
    <property type="entry name" value="Transp-assoc_OB_typ1"/>
</dbReference>
<dbReference type="NCBIfam" id="TIGR02142">
    <property type="entry name" value="modC_ABC"/>
    <property type="match status" value="1"/>
</dbReference>
<dbReference type="PANTHER" id="PTHR43514">
    <property type="entry name" value="ABC TRANSPORTER I FAMILY MEMBER 10"/>
    <property type="match status" value="1"/>
</dbReference>
<dbReference type="PANTHER" id="PTHR43514:SF10">
    <property type="entry name" value="MOLYBDENUM IMPORT ATP-BINDING PROTEIN MODC 2"/>
    <property type="match status" value="1"/>
</dbReference>
<dbReference type="Pfam" id="PF00005">
    <property type="entry name" value="ABC_tran"/>
    <property type="match status" value="1"/>
</dbReference>
<dbReference type="Pfam" id="PF03459">
    <property type="entry name" value="TOBE"/>
    <property type="match status" value="1"/>
</dbReference>
<dbReference type="SMART" id="SM00382">
    <property type="entry name" value="AAA"/>
    <property type="match status" value="1"/>
</dbReference>
<dbReference type="SUPFAM" id="SSF50331">
    <property type="entry name" value="MOP-like"/>
    <property type="match status" value="1"/>
</dbReference>
<dbReference type="SUPFAM" id="SSF52540">
    <property type="entry name" value="P-loop containing nucleoside triphosphate hydrolases"/>
    <property type="match status" value="1"/>
</dbReference>
<dbReference type="PROSITE" id="PS00211">
    <property type="entry name" value="ABC_TRANSPORTER_1"/>
    <property type="match status" value="1"/>
</dbReference>
<dbReference type="PROSITE" id="PS50893">
    <property type="entry name" value="ABC_TRANSPORTER_2"/>
    <property type="match status" value="1"/>
</dbReference>
<dbReference type="PROSITE" id="PS51241">
    <property type="entry name" value="MODC"/>
    <property type="match status" value="1"/>
</dbReference>
<dbReference type="PROSITE" id="PS51866">
    <property type="entry name" value="MOP"/>
    <property type="match status" value="1"/>
</dbReference>